<evidence type="ECO:0000255" key="1">
    <source>
        <dbReference type="HAMAP-Rule" id="MF_00208"/>
    </source>
</evidence>
<keyword id="KW-0067">ATP-binding</keyword>
<keyword id="KW-0131">Cell cycle</keyword>
<keyword id="KW-0132">Cell division</keyword>
<keyword id="KW-0133">Cell shape</keyword>
<keyword id="KW-0961">Cell wall biogenesis/degradation</keyword>
<keyword id="KW-0963">Cytoplasm</keyword>
<keyword id="KW-0436">Ligase</keyword>
<keyword id="KW-0460">Magnesium</keyword>
<keyword id="KW-0547">Nucleotide-binding</keyword>
<keyword id="KW-0573">Peptidoglycan synthesis</keyword>
<protein>
    <recommendedName>
        <fullName evidence="1">UDP-N-acetylmuramoyl-L-alanyl-D-glutamate--2,6-diaminopimelate ligase</fullName>
        <ecNumber evidence="1">6.3.2.13</ecNumber>
    </recommendedName>
    <alternativeName>
        <fullName evidence="1">Meso-A2pm-adding enzyme</fullName>
    </alternativeName>
    <alternativeName>
        <fullName evidence="1">Meso-diaminopimelate-adding enzyme</fullName>
    </alternativeName>
    <alternativeName>
        <fullName evidence="1">UDP-MurNAc-L-Ala-D-Glu:meso-diaminopimelate ligase</fullName>
    </alternativeName>
    <alternativeName>
        <fullName evidence="1">UDP-MurNAc-tripeptide synthetase</fullName>
    </alternativeName>
    <alternativeName>
        <fullName evidence="1">UDP-N-acetylmuramyl-tripeptide synthetase</fullName>
    </alternativeName>
</protein>
<feature type="chain" id="PRO_0000101932" description="UDP-N-acetylmuramoyl-L-alanyl-D-glutamate--2,6-diaminopimelate ligase">
    <location>
        <begin position="1"/>
        <end position="479"/>
    </location>
</feature>
<feature type="short sequence motif" description="Meso-diaminopimelate recognition motif">
    <location>
        <begin position="396"/>
        <end position="399"/>
    </location>
</feature>
<feature type="binding site" evidence="1">
    <location>
        <position position="21"/>
    </location>
    <ligand>
        <name>UDP-N-acetyl-alpha-D-muramoyl-L-alanyl-D-glutamate</name>
        <dbReference type="ChEBI" id="CHEBI:83900"/>
    </ligand>
</feature>
<feature type="binding site" evidence="1">
    <location>
        <begin position="98"/>
        <end position="104"/>
    </location>
    <ligand>
        <name>ATP</name>
        <dbReference type="ChEBI" id="CHEBI:30616"/>
    </ligand>
</feature>
<feature type="binding site" evidence="1">
    <location>
        <begin position="144"/>
        <end position="145"/>
    </location>
    <ligand>
        <name>UDP-N-acetyl-alpha-D-muramoyl-L-alanyl-D-glutamate</name>
        <dbReference type="ChEBI" id="CHEBI:83900"/>
    </ligand>
</feature>
<feature type="binding site" evidence="1">
    <location>
        <position position="171"/>
    </location>
    <ligand>
        <name>UDP-N-acetyl-alpha-D-muramoyl-L-alanyl-D-glutamate</name>
        <dbReference type="ChEBI" id="CHEBI:83900"/>
    </ligand>
</feature>
<feature type="binding site" evidence="1">
    <location>
        <position position="177"/>
    </location>
    <ligand>
        <name>UDP-N-acetyl-alpha-D-muramoyl-L-alanyl-D-glutamate</name>
        <dbReference type="ChEBI" id="CHEBI:83900"/>
    </ligand>
</feature>
<feature type="binding site" evidence="1">
    <location>
        <position position="179"/>
    </location>
    <ligand>
        <name>UDP-N-acetyl-alpha-D-muramoyl-L-alanyl-D-glutamate</name>
        <dbReference type="ChEBI" id="CHEBI:83900"/>
    </ligand>
</feature>
<feature type="binding site" evidence="1">
    <location>
        <position position="372"/>
    </location>
    <ligand>
        <name>meso-2,6-diaminopimelate</name>
        <dbReference type="ChEBI" id="CHEBI:57791"/>
    </ligand>
</feature>
<feature type="binding site" evidence="1">
    <location>
        <begin position="396"/>
        <end position="399"/>
    </location>
    <ligand>
        <name>meso-2,6-diaminopimelate</name>
        <dbReference type="ChEBI" id="CHEBI:57791"/>
    </ligand>
</feature>
<feature type="binding site" evidence="1">
    <location>
        <position position="446"/>
    </location>
    <ligand>
        <name>meso-2,6-diaminopimelate</name>
        <dbReference type="ChEBI" id="CHEBI:57791"/>
    </ligand>
</feature>
<feature type="binding site" evidence="1">
    <location>
        <position position="450"/>
    </location>
    <ligand>
        <name>meso-2,6-diaminopimelate</name>
        <dbReference type="ChEBI" id="CHEBI:57791"/>
    </ligand>
</feature>
<feature type="modified residue" description="N6-carboxylysine" evidence="1">
    <location>
        <position position="211"/>
    </location>
</feature>
<accession>Q92H59</accession>
<proteinExistence type="inferred from homology"/>
<sequence>MSHNLKQLFQQHNVKGLSINSKTVKDKDIFFAIKGQNTDGNDFIKDALSKGAVLVITDNKKNIVIDKVIYVKDVQAALYEAIEIFYPKKPKDLIAVTGTNGKSSVVSYIAQTYSLLGKKAASIGTIGVEIFGCVNLINDVPELTTLDYLSFRKIAHNLAENGIEYLVFEASSHGLDQARLREIKVNIACFTSFSQDHLDYHHTKENYLLAKLKLFINHLLPNGIAILNSDIEEIEFVKDYLHNHNIKFITVGTKGDLEITRLNGSLKGQNINFTFNNREYNFNTPIIGSFQASNLLIAVLSIHYIGFAFDDVIDSLVEVKAVKGRMERIDNTNIFVDYAHTPDALEKALTELKNIKLRDSKLSVVFGCGGNRDKAKRSLMGQIAAKRADTIIITDDNPRHEDPKLIRAEIISGIEKADYTEIANREEAIKYGINNLKQDDILLVAGKGHENYQIIGDKKLPFDDAEVVRKCVKVCHPVA</sequence>
<organism>
    <name type="scientific">Rickettsia conorii (strain ATCC VR-613 / Malish 7)</name>
    <dbReference type="NCBI Taxonomy" id="272944"/>
    <lineage>
        <taxon>Bacteria</taxon>
        <taxon>Pseudomonadati</taxon>
        <taxon>Pseudomonadota</taxon>
        <taxon>Alphaproteobacteria</taxon>
        <taxon>Rickettsiales</taxon>
        <taxon>Rickettsiaceae</taxon>
        <taxon>Rickettsieae</taxon>
        <taxon>Rickettsia</taxon>
        <taxon>spotted fever group</taxon>
    </lineage>
</organism>
<reference key="1">
    <citation type="journal article" date="2001" name="Science">
        <title>Mechanisms of evolution in Rickettsia conorii and R. prowazekii.</title>
        <authorList>
            <person name="Ogata H."/>
            <person name="Audic S."/>
            <person name="Renesto-Audiffren P."/>
            <person name="Fournier P.-E."/>
            <person name="Barbe V."/>
            <person name="Samson D."/>
            <person name="Roux V."/>
            <person name="Cossart P."/>
            <person name="Weissenbach J."/>
            <person name="Claverie J.-M."/>
            <person name="Raoult D."/>
        </authorList>
    </citation>
    <scope>NUCLEOTIDE SEQUENCE [LARGE SCALE GENOMIC DNA]</scope>
    <source>
        <strain>ATCC VR-613 / Malish 7</strain>
    </source>
</reference>
<dbReference type="EC" id="6.3.2.13" evidence="1"/>
<dbReference type="EMBL" id="AE006914">
    <property type="protein sequence ID" value="AAL03450.1"/>
    <property type="molecule type" value="Genomic_DNA"/>
</dbReference>
<dbReference type="PIR" id="H97813">
    <property type="entry name" value="H97813"/>
</dbReference>
<dbReference type="RefSeq" id="WP_010977512.1">
    <property type="nucleotide sequence ID" value="NC_003103.1"/>
</dbReference>
<dbReference type="SMR" id="Q92H59"/>
<dbReference type="GeneID" id="928847"/>
<dbReference type="KEGG" id="rco:RC0912"/>
<dbReference type="PATRIC" id="fig|272944.4.peg.1036"/>
<dbReference type="HOGENOM" id="CLU_022291_3_1_5"/>
<dbReference type="UniPathway" id="UPA00219"/>
<dbReference type="Proteomes" id="UP000000816">
    <property type="component" value="Chromosome"/>
</dbReference>
<dbReference type="GO" id="GO:0005737">
    <property type="term" value="C:cytoplasm"/>
    <property type="evidence" value="ECO:0007669"/>
    <property type="project" value="UniProtKB-SubCell"/>
</dbReference>
<dbReference type="GO" id="GO:0005524">
    <property type="term" value="F:ATP binding"/>
    <property type="evidence" value="ECO:0007669"/>
    <property type="project" value="UniProtKB-UniRule"/>
</dbReference>
<dbReference type="GO" id="GO:0000287">
    <property type="term" value="F:magnesium ion binding"/>
    <property type="evidence" value="ECO:0007669"/>
    <property type="project" value="UniProtKB-UniRule"/>
</dbReference>
<dbReference type="GO" id="GO:0008765">
    <property type="term" value="F:UDP-N-acetylmuramoylalanyl-D-glutamate-2,6-diaminopimelate ligase activity"/>
    <property type="evidence" value="ECO:0007669"/>
    <property type="project" value="UniProtKB-UniRule"/>
</dbReference>
<dbReference type="GO" id="GO:0051301">
    <property type="term" value="P:cell division"/>
    <property type="evidence" value="ECO:0007669"/>
    <property type="project" value="UniProtKB-KW"/>
</dbReference>
<dbReference type="GO" id="GO:0071555">
    <property type="term" value="P:cell wall organization"/>
    <property type="evidence" value="ECO:0007669"/>
    <property type="project" value="UniProtKB-KW"/>
</dbReference>
<dbReference type="GO" id="GO:0009252">
    <property type="term" value="P:peptidoglycan biosynthetic process"/>
    <property type="evidence" value="ECO:0007669"/>
    <property type="project" value="UniProtKB-UniRule"/>
</dbReference>
<dbReference type="GO" id="GO:0008360">
    <property type="term" value="P:regulation of cell shape"/>
    <property type="evidence" value="ECO:0007669"/>
    <property type="project" value="UniProtKB-KW"/>
</dbReference>
<dbReference type="Gene3D" id="3.90.190.20">
    <property type="entry name" value="Mur ligase, C-terminal domain"/>
    <property type="match status" value="1"/>
</dbReference>
<dbReference type="Gene3D" id="3.40.1190.10">
    <property type="entry name" value="Mur-like, catalytic domain"/>
    <property type="match status" value="1"/>
</dbReference>
<dbReference type="Gene3D" id="3.40.1390.10">
    <property type="entry name" value="MurE/MurF, N-terminal domain"/>
    <property type="match status" value="1"/>
</dbReference>
<dbReference type="HAMAP" id="MF_00208">
    <property type="entry name" value="MurE"/>
    <property type="match status" value="1"/>
</dbReference>
<dbReference type="InterPro" id="IPR036565">
    <property type="entry name" value="Mur-like_cat_sf"/>
</dbReference>
<dbReference type="InterPro" id="IPR004101">
    <property type="entry name" value="Mur_ligase_C"/>
</dbReference>
<dbReference type="InterPro" id="IPR036615">
    <property type="entry name" value="Mur_ligase_C_dom_sf"/>
</dbReference>
<dbReference type="InterPro" id="IPR013221">
    <property type="entry name" value="Mur_ligase_cen"/>
</dbReference>
<dbReference type="InterPro" id="IPR000713">
    <property type="entry name" value="Mur_ligase_N"/>
</dbReference>
<dbReference type="InterPro" id="IPR035911">
    <property type="entry name" value="MurE/MurF_N"/>
</dbReference>
<dbReference type="InterPro" id="IPR005761">
    <property type="entry name" value="UDP-N-AcMur-Glu-dNH2Pim_ligase"/>
</dbReference>
<dbReference type="NCBIfam" id="TIGR01085">
    <property type="entry name" value="murE"/>
    <property type="match status" value="1"/>
</dbReference>
<dbReference type="NCBIfam" id="NF001124">
    <property type="entry name" value="PRK00139.1-2"/>
    <property type="match status" value="1"/>
</dbReference>
<dbReference type="NCBIfam" id="NF001126">
    <property type="entry name" value="PRK00139.1-4"/>
    <property type="match status" value="1"/>
</dbReference>
<dbReference type="PANTHER" id="PTHR23135">
    <property type="entry name" value="MUR LIGASE FAMILY MEMBER"/>
    <property type="match status" value="1"/>
</dbReference>
<dbReference type="PANTHER" id="PTHR23135:SF4">
    <property type="entry name" value="UDP-N-ACETYLMURAMOYL-L-ALANYL-D-GLUTAMATE--2,6-DIAMINOPIMELATE LIGASE MURE HOMOLOG, CHLOROPLASTIC"/>
    <property type="match status" value="1"/>
</dbReference>
<dbReference type="Pfam" id="PF01225">
    <property type="entry name" value="Mur_ligase"/>
    <property type="match status" value="1"/>
</dbReference>
<dbReference type="Pfam" id="PF02875">
    <property type="entry name" value="Mur_ligase_C"/>
    <property type="match status" value="1"/>
</dbReference>
<dbReference type="Pfam" id="PF08245">
    <property type="entry name" value="Mur_ligase_M"/>
    <property type="match status" value="1"/>
</dbReference>
<dbReference type="SUPFAM" id="SSF53623">
    <property type="entry name" value="MurD-like peptide ligases, catalytic domain"/>
    <property type="match status" value="1"/>
</dbReference>
<dbReference type="SUPFAM" id="SSF53244">
    <property type="entry name" value="MurD-like peptide ligases, peptide-binding domain"/>
    <property type="match status" value="1"/>
</dbReference>
<dbReference type="SUPFAM" id="SSF63418">
    <property type="entry name" value="MurE/MurF N-terminal domain"/>
    <property type="match status" value="1"/>
</dbReference>
<gene>
    <name evidence="1" type="primary">murE</name>
    <name type="ordered locus">RC0912</name>
</gene>
<name>MURE_RICCN</name>
<comment type="function">
    <text evidence="1">Catalyzes the addition of meso-diaminopimelic acid to the nucleotide precursor UDP-N-acetylmuramoyl-L-alanyl-D-glutamate (UMAG) in the biosynthesis of bacterial cell-wall peptidoglycan.</text>
</comment>
<comment type="catalytic activity">
    <reaction evidence="1">
        <text>UDP-N-acetyl-alpha-D-muramoyl-L-alanyl-D-glutamate + meso-2,6-diaminopimelate + ATP = UDP-N-acetyl-alpha-D-muramoyl-L-alanyl-gamma-D-glutamyl-meso-2,6-diaminopimelate + ADP + phosphate + H(+)</text>
        <dbReference type="Rhea" id="RHEA:23676"/>
        <dbReference type="ChEBI" id="CHEBI:15378"/>
        <dbReference type="ChEBI" id="CHEBI:30616"/>
        <dbReference type="ChEBI" id="CHEBI:43474"/>
        <dbReference type="ChEBI" id="CHEBI:57791"/>
        <dbReference type="ChEBI" id="CHEBI:83900"/>
        <dbReference type="ChEBI" id="CHEBI:83905"/>
        <dbReference type="ChEBI" id="CHEBI:456216"/>
        <dbReference type="EC" id="6.3.2.13"/>
    </reaction>
</comment>
<comment type="cofactor">
    <cofactor evidence="1">
        <name>Mg(2+)</name>
        <dbReference type="ChEBI" id="CHEBI:18420"/>
    </cofactor>
</comment>
<comment type="pathway">
    <text evidence="1">Cell wall biogenesis; peptidoglycan biosynthesis.</text>
</comment>
<comment type="subcellular location">
    <subcellularLocation>
        <location evidence="1">Cytoplasm</location>
    </subcellularLocation>
</comment>
<comment type="PTM">
    <text evidence="1">Carboxylation is probably crucial for Mg(2+) binding and, consequently, for the gamma-phosphate positioning of ATP.</text>
</comment>
<comment type="similarity">
    <text evidence="1">Belongs to the MurCDEF family. MurE subfamily.</text>
</comment>